<accession>Q11091</accession>
<proteinExistence type="predicted"/>
<name>YWZ1_CAEEL</name>
<feature type="chain" id="PRO_0000065099" description="Uncharacterized protein C02B8.1">
    <location>
        <begin position="1"/>
        <end position="112"/>
    </location>
</feature>
<feature type="region of interest" description="Disordered" evidence="1">
    <location>
        <begin position="91"/>
        <end position="112"/>
    </location>
</feature>
<feature type="compositionally biased region" description="Basic and acidic residues" evidence="1">
    <location>
        <begin position="103"/>
        <end position="112"/>
    </location>
</feature>
<sequence>MPRKLLEERSTGSATKWLREEEKIEKKSRADQLKIKFMQTRDNSDINSIFSEPPSEFSVLCDDDDCDKGSVVSSTLTTSIRKTFSSFRFDENQRKKGTRKRRSSEVDSKEKS</sequence>
<evidence type="ECO:0000256" key="1">
    <source>
        <dbReference type="SAM" id="MobiDB-lite"/>
    </source>
</evidence>
<organism>
    <name type="scientific">Caenorhabditis elegans</name>
    <dbReference type="NCBI Taxonomy" id="6239"/>
    <lineage>
        <taxon>Eukaryota</taxon>
        <taxon>Metazoa</taxon>
        <taxon>Ecdysozoa</taxon>
        <taxon>Nematoda</taxon>
        <taxon>Chromadorea</taxon>
        <taxon>Rhabditida</taxon>
        <taxon>Rhabditina</taxon>
        <taxon>Rhabditomorpha</taxon>
        <taxon>Rhabditoidea</taxon>
        <taxon>Rhabditidae</taxon>
        <taxon>Peloderinae</taxon>
        <taxon>Caenorhabditis</taxon>
    </lineage>
</organism>
<gene>
    <name type="ORF">C02B8.1</name>
</gene>
<dbReference type="EMBL" id="FO080272">
    <property type="protein sequence ID" value="CCD62503.1"/>
    <property type="molecule type" value="Genomic_DNA"/>
</dbReference>
<dbReference type="PIR" id="T15379">
    <property type="entry name" value="T15379"/>
</dbReference>
<dbReference type="RefSeq" id="NP_001361920.1">
    <property type="nucleotide sequence ID" value="NM_001375082.2"/>
</dbReference>
<dbReference type="RefSeq" id="NP_509373.2">
    <property type="nucleotide sequence ID" value="NM_076972.4"/>
</dbReference>
<dbReference type="SMR" id="Q11091"/>
<dbReference type="STRING" id="6239.C02B8.1.1"/>
<dbReference type="PaxDb" id="6239-C02B8.1.1"/>
<dbReference type="EnsemblMetazoa" id="C02B8.1.1">
    <property type="protein sequence ID" value="C02B8.1.1"/>
    <property type="gene ID" value="WBGene00015320"/>
</dbReference>
<dbReference type="GeneID" id="181072"/>
<dbReference type="UCSC" id="C02B8.1.1">
    <property type="organism name" value="c. elegans"/>
</dbReference>
<dbReference type="AGR" id="WB:WBGene00015320"/>
<dbReference type="WormBase" id="C02B8.1">
    <property type="protein sequence ID" value="CE33514"/>
    <property type="gene ID" value="WBGene00015320"/>
</dbReference>
<dbReference type="eggNOG" id="KOG0654">
    <property type="taxonomic scope" value="Eukaryota"/>
</dbReference>
<dbReference type="HOGENOM" id="CLU_2148100_0_0_1"/>
<dbReference type="InParanoid" id="Q11091"/>
<dbReference type="PRO" id="PR:Q11091"/>
<dbReference type="Proteomes" id="UP000001940">
    <property type="component" value="Chromosome X"/>
</dbReference>
<dbReference type="Bgee" id="WBGene00015320">
    <property type="expression patterns" value="Expressed in anatomical system and 4 other cell types or tissues"/>
</dbReference>
<keyword id="KW-1185">Reference proteome</keyword>
<protein>
    <recommendedName>
        <fullName>Uncharacterized protein C02B8.1</fullName>
    </recommendedName>
</protein>
<reference key="1">
    <citation type="journal article" date="1998" name="Science">
        <title>Genome sequence of the nematode C. elegans: a platform for investigating biology.</title>
        <authorList>
            <consortium name="The C. elegans sequencing consortium"/>
        </authorList>
    </citation>
    <scope>NUCLEOTIDE SEQUENCE [LARGE SCALE GENOMIC DNA]</scope>
    <source>
        <strain>Bristol N2</strain>
    </source>
</reference>